<comment type="function">
    <text evidence="1">Located on the platform of the 30S subunit, it bridges several disparate RNA helices of the 16S rRNA. Forms part of the Shine-Dalgarno cleft in the 70S ribosome.</text>
</comment>
<comment type="subunit">
    <text evidence="1">Part of the 30S ribosomal subunit. Interacts with proteins S7 and S18. Binds to IF-3.</text>
</comment>
<comment type="similarity">
    <text evidence="1">Belongs to the universal ribosomal protein uS11 family.</text>
</comment>
<proteinExistence type="inferred from homology"/>
<feature type="chain" id="PRO_1000165564" description="Small ribosomal subunit protein uS11">
    <location>
        <begin position="1"/>
        <end position="129"/>
    </location>
</feature>
<accession>B9KLB4</accession>
<organism>
    <name type="scientific">Cereibacter sphaeroides (strain KD131 / KCTC 12085)</name>
    <name type="common">Rhodobacter sphaeroides</name>
    <dbReference type="NCBI Taxonomy" id="557760"/>
    <lineage>
        <taxon>Bacteria</taxon>
        <taxon>Pseudomonadati</taxon>
        <taxon>Pseudomonadota</taxon>
        <taxon>Alphaproteobacteria</taxon>
        <taxon>Rhodobacterales</taxon>
        <taxon>Paracoccaceae</taxon>
        <taxon>Cereibacter</taxon>
    </lineage>
</organism>
<keyword id="KW-0687">Ribonucleoprotein</keyword>
<keyword id="KW-0689">Ribosomal protein</keyword>
<keyword id="KW-0694">RNA-binding</keyword>
<keyword id="KW-0699">rRNA-binding</keyword>
<gene>
    <name evidence="1" type="primary">rpsK</name>
    <name type="ordered locus">RSKD131_0037</name>
</gene>
<reference key="1">
    <citation type="journal article" date="2009" name="J. Bacteriol.">
        <title>Complete genome sequence of Rhodobacter sphaeroides KD131.</title>
        <authorList>
            <person name="Lim S.-K."/>
            <person name="Kim S.J."/>
            <person name="Cha S.H."/>
            <person name="Oh Y.-K."/>
            <person name="Rhee H.-J."/>
            <person name="Kim M.-S."/>
            <person name="Lee J.K."/>
        </authorList>
    </citation>
    <scope>NUCLEOTIDE SEQUENCE [LARGE SCALE GENOMIC DNA]</scope>
    <source>
        <strain>KD131 / KCTC 12085</strain>
    </source>
</reference>
<protein>
    <recommendedName>
        <fullName evidence="1">Small ribosomal subunit protein uS11</fullName>
    </recommendedName>
    <alternativeName>
        <fullName evidence="2">30S ribosomal protein S11</fullName>
    </alternativeName>
</protein>
<name>RS11_CERSK</name>
<sequence length="129" mass="13848">MARDKTRMKRKERKNIAAGVAHVNSSFNNTKILISDVQGNAISWSSAGTMGFKGSRKSTPYAAQMAAEDAAKKAQDHGMKTIEVEVQGPGSGRESALRALAAAGLNITSIRDVTPMAHNGCRPPKRRRV</sequence>
<evidence type="ECO:0000255" key="1">
    <source>
        <dbReference type="HAMAP-Rule" id="MF_01310"/>
    </source>
</evidence>
<evidence type="ECO:0000305" key="2"/>
<dbReference type="EMBL" id="CP001150">
    <property type="protein sequence ID" value="ACL99896.1"/>
    <property type="molecule type" value="Genomic_DNA"/>
</dbReference>
<dbReference type="RefSeq" id="WP_002722534.1">
    <property type="nucleotide sequence ID" value="NC_011963.1"/>
</dbReference>
<dbReference type="SMR" id="B9KLB4"/>
<dbReference type="GeneID" id="67445523"/>
<dbReference type="KEGG" id="rsk:RSKD131_0037"/>
<dbReference type="HOGENOM" id="CLU_072439_5_0_5"/>
<dbReference type="GO" id="GO:1990904">
    <property type="term" value="C:ribonucleoprotein complex"/>
    <property type="evidence" value="ECO:0007669"/>
    <property type="project" value="UniProtKB-KW"/>
</dbReference>
<dbReference type="GO" id="GO:0005840">
    <property type="term" value="C:ribosome"/>
    <property type="evidence" value="ECO:0007669"/>
    <property type="project" value="UniProtKB-KW"/>
</dbReference>
<dbReference type="GO" id="GO:0019843">
    <property type="term" value="F:rRNA binding"/>
    <property type="evidence" value="ECO:0007669"/>
    <property type="project" value="UniProtKB-UniRule"/>
</dbReference>
<dbReference type="GO" id="GO:0003735">
    <property type="term" value="F:structural constituent of ribosome"/>
    <property type="evidence" value="ECO:0007669"/>
    <property type="project" value="InterPro"/>
</dbReference>
<dbReference type="GO" id="GO:0006412">
    <property type="term" value="P:translation"/>
    <property type="evidence" value="ECO:0007669"/>
    <property type="project" value="UniProtKB-UniRule"/>
</dbReference>
<dbReference type="FunFam" id="3.30.420.80:FF:000001">
    <property type="entry name" value="30S ribosomal protein S11"/>
    <property type="match status" value="1"/>
</dbReference>
<dbReference type="Gene3D" id="3.30.420.80">
    <property type="entry name" value="Ribosomal protein S11"/>
    <property type="match status" value="1"/>
</dbReference>
<dbReference type="HAMAP" id="MF_01310">
    <property type="entry name" value="Ribosomal_uS11"/>
    <property type="match status" value="1"/>
</dbReference>
<dbReference type="InterPro" id="IPR001971">
    <property type="entry name" value="Ribosomal_uS11"/>
</dbReference>
<dbReference type="InterPro" id="IPR019981">
    <property type="entry name" value="Ribosomal_uS11_bac-type"/>
</dbReference>
<dbReference type="InterPro" id="IPR018102">
    <property type="entry name" value="Ribosomal_uS11_CS"/>
</dbReference>
<dbReference type="InterPro" id="IPR036967">
    <property type="entry name" value="Ribosomal_uS11_sf"/>
</dbReference>
<dbReference type="NCBIfam" id="NF003698">
    <property type="entry name" value="PRK05309.1"/>
    <property type="match status" value="1"/>
</dbReference>
<dbReference type="NCBIfam" id="TIGR03632">
    <property type="entry name" value="uS11_bact"/>
    <property type="match status" value="1"/>
</dbReference>
<dbReference type="PANTHER" id="PTHR11759">
    <property type="entry name" value="40S RIBOSOMAL PROTEIN S14/30S RIBOSOMAL PROTEIN S11"/>
    <property type="match status" value="1"/>
</dbReference>
<dbReference type="Pfam" id="PF00411">
    <property type="entry name" value="Ribosomal_S11"/>
    <property type="match status" value="1"/>
</dbReference>
<dbReference type="PIRSF" id="PIRSF002131">
    <property type="entry name" value="Ribosomal_S11"/>
    <property type="match status" value="1"/>
</dbReference>
<dbReference type="SUPFAM" id="SSF53137">
    <property type="entry name" value="Translational machinery components"/>
    <property type="match status" value="1"/>
</dbReference>
<dbReference type="PROSITE" id="PS00054">
    <property type="entry name" value="RIBOSOMAL_S11"/>
    <property type="match status" value="1"/>
</dbReference>